<proteinExistence type="inferred from homology"/>
<protein>
    <recommendedName>
        <fullName evidence="1">Disulfide bond formation protein B</fullName>
    </recommendedName>
    <alternativeName>
        <fullName evidence="1">Disulfide oxidoreductase</fullName>
    </alternativeName>
</protein>
<comment type="function">
    <text evidence="1">Required for disulfide bond formation in some periplasmic proteins. Acts by oxidizing the DsbA protein.</text>
</comment>
<comment type="subcellular location">
    <subcellularLocation>
        <location evidence="1">Cell inner membrane</location>
        <topology evidence="1">Multi-pass membrane protein</topology>
    </subcellularLocation>
</comment>
<comment type="similarity">
    <text evidence="1">Belongs to the DsbB family.</text>
</comment>
<dbReference type="EMBL" id="CR628337">
    <property type="protein sequence ID" value="CAH16895.1"/>
    <property type="molecule type" value="Genomic_DNA"/>
</dbReference>
<dbReference type="RefSeq" id="WP_011216590.1">
    <property type="nucleotide sequence ID" value="NC_006369.1"/>
</dbReference>
<dbReference type="KEGG" id="lpf:lpl2654"/>
<dbReference type="LegioList" id="lpl2654"/>
<dbReference type="HOGENOM" id="CLU_098660_1_1_6"/>
<dbReference type="Proteomes" id="UP000002517">
    <property type="component" value="Chromosome"/>
</dbReference>
<dbReference type="GO" id="GO:0005886">
    <property type="term" value="C:plasma membrane"/>
    <property type="evidence" value="ECO:0007669"/>
    <property type="project" value="UniProtKB-SubCell"/>
</dbReference>
<dbReference type="GO" id="GO:0009055">
    <property type="term" value="F:electron transfer activity"/>
    <property type="evidence" value="ECO:0007669"/>
    <property type="project" value="UniProtKB-UniRule"/>
</dbReference>
<dbReference type="GO" id="GO:0015035">
    <property type="term" value="F:protein-disulfide reductase activity"/>
    <property type="evidence" value="ECO:0007669"/>
    <property type="project" value="UniProtKB-UniRule"/>
</dbReference>
<dbReference type="GO" id="GO:0006457">
    <property type="term" value="P:protein folding"/>
    <property type="evidence" value="ECO:0007669"/>
    <property type="project" value="InterPro"/>
</dbReference>
<dbReference type="Gene3D" id="1.20.1550.10">
    <property type="entry name" value="DsbB-like"/>
    <property type="match status" value="1"/>
</dbReference>
<dbReference type="HAMAP" id="MF_00286">
    <property type="entry name" value="DsbB"/>
    <property type="match status" value="1"/>
</dbReference>
<dbReference type="InterPro" id="IPR003752">
    <property type="entry name" value="DiS_bond_form_DsbB/BdbC"/>
</dbReference>
<dbReference type="InterPro" id="IPR022920">
    <property type="entry name" value="Disulphide_bond_form_DsbB"/>
</dbReference>
<dbReference type="InterPro" id="IPR050183">
    <property type="entry name" value="DsbB"/>
</dbReference>
<dbReference type="InterPro" id="IPR023380">
    <property type="entry name" value="DsbB-like_sf"/>
</dbReference>
<dbReference type="PANTHER" id="PTHR36570">
    <property type="entry name" value="DISULFIDE BOND FORMATION PROTEIN B"/>
    <property type="match status" value="1"/>
</dbReference>
<dbReference type="PANTHER" id="PTHR36570:SF3">
    <property type="entry name" value="DISULFIDE BOND FORMATION PROTEIN B"/>
    <property type="match status" value="1"/>
</dbReference>
<dbReference type="Pfam" id="PF02600">
    <property type="entry name" value="DsbB"/>
    <property type="match status" value="1"/>
</dbReference>
<dbReference type="SUPFAM" id="SSF158442">
    <property type="entry name" value="DsbB-like"/>
    <property type="match status" value="1"/>
</dbReference>
<name>DSBB_LEGPL</name>
<reference key="1">
    <citation type="journal article" date="2004" name="Nat. Genet.">
        <title>Evidence in the Legionella pneumophila genome for exploitation of host cell functions and high genome plasticity.</title>
        <authorList>
            <person name="Cazalet C."/>
            <person name="Rusniok C."/>
            <person name="Brueggemann H."/>
            <person name="Zidane N."/>
            <person name="Magnier A."/>
            <person name="Ma L."/>
            <person name="Tichit M."/>
            <person name="Jarraud S."/>
            <person name="Bouchier C."/>
            <person name="Vandenesch F."/>
            <person name="Kunst F."/>
            <person name="Etienne J."/>
            <person name="Glaser P."/>
            <person name="Buchrieser C."/>
        </authorList>
    </citation>
    <scope>NUCLEOTIDE SEQUENCE [LARGE SCALE GENOMIC DNA]</scope>
    <source>
        <strain>Lens</strain>
    </source>
</reference>
<gene>
    <name evidence="1" type="primary">dsbB</name>
    <name type="ordered locus">lpl2654</name>
</gene>
<organism>
    <name type="scientific">Legionella pneumophila (strain Lens)</name>
    <dbReference type="NCBI Taxonomy" id="297245"/>
    <lineage>
        <taxon>Bacteria</taxon>
        <taxon>Pseudomonadati</taxon>
        <taxon>Pseudomonadota</taxon>
        <taxon>Gammaproteobacteria</taxon>
        <taxon>Legionellales</taxon>
        <taxon>Legionellaceae</taxon>
        <taxon>Legionella</taxon>
    </lineage>
</organism>
<feature type="chain" id="PRO_0000298365" description="Disulfide bond formation protein B">
    <location>
        <begin position="1"/>
        <end position="163"/>
    </location>
</feature>
<feature type="topological domain" description="Cytoplasmic" evidence="1">
    <location>
        <begin position="1"/>
        <end position="9"/>
    </location>
</feature>
<feature type="transmembrane region" description="Helical" evidence="1">
    <location>
        <begin position="10"/>
        <end position="26"/>
    </location>
</feature>
<feature type="topological domain" description="Periplasmic" evidence="1">
    <location>
        <begin position="27"/>
        <end position="44"/>
    </location>
</feature>
<feature type="transmembrane region" description="Helical" evidence="1">
    <location>
        <begin position="45"/>
        <end position="58"/>
    </location>
</feature>
<feature type="topological domain" description="Cytoplasmic" evidence="1">
    <location>
        <begin position="59"/>
        <end position="64"/>
    </location>
</feature>
<feature type="transmembrane region" description="Helical" evidence="1">
    <location>
        <begin position="65"/>
        <end position="82"/>
    </location>
</feature>
<feature type="topological domain" description="Periplasmic" evidence="1">
    <location>
        <begin position="83"/>
        <end position="139"/>
    </location>
</feature>
<feature type="transmembrane region" description="Helical" evidence="1">
    <location>
        <begin position="140"/>
        <end position="158"/>
    </location>
</feature>
<feature type="topological domain" description="Cytoplasmic" evidence="1">
    <location>
        <begin position="159"/>
        <end position="163"/>
    </location>
</feature>
<feature type="disulfide bond" description="Redox-active" evidence="1">
    <location>
        <begin position="36"/>
        <end position="39"/>
    </location>
</feature>
<feature type="disulfide bond" description="Redox-active" evidence="1">
    <location>
        <begin position="98"/>
        <end position="125"/>
    </location>
</feature>
<accession>Q5WT71</accession>
<sequence>MKKLTYRKIQSFQAIITVLVIFASFYLEYAAGLQPCPLCLMQRVCVFILLGLMGVSLGTVKKAHIVSLIQFQVACAGLYFSLRQLWLQSLPSDQAPACMPGLDVLIQYFPWQTVAKALFWGAGDCAEVTWTMFGVSMPGWAAMYFLSMAIMGLFLFFRTRTIN</sequence>
<evidence type="ECO:0000255" key="1">
    <source>
        <dbReference type="HAMAP-Rule" id="MF_00286"/>
    </source>
</evidence>
<keyword id="KW-0997">Cell inner membrane</keyword>
<keyword id="KW-1003">Cell membrane</keyword>
<keyword id="KW-0143">Chaperone</keyword>
<keyword id="KW-1015">Disulfide bond</keyword>
<keyword id="KW-0249">Electron transport</keyword>
<keyword id="KW-0472">Membrane</keyword>
<keyword id="KW-0560">Oxidoreductase</keyword>
<keyword id="KW-0676">Redox-active center</keyword>
<keyword id="KW-0812">Transmembrane</keyword>
<keyword id="KW-1133">Transmembrane helix</keyword>
<keyword id="KW-0813">Transport</keyword>